<proteinExistence type="inferred from homology"/>
<reference key="1">
    <citation type="submission" date="2003-01" db="EMBL/GenBank/DDBJ databases">
        <title>Chloroplast DNA phylogeny of tribe Heliantheae (Asteraceae).</title>
        <authorList>
            <person name="Panero J.L."/>
            <person name="Baldwin B.G."/>
            <person name="Schilling E.E."/>
            <person name="Clevinger J.A."/>
        </authorList>
    </citation>
    <scope>NUCLEOTIDE SEQUENCE [GENOMIC DNA]</scope>
</reference>
<keyword id="KW-0004">4Fe-4S</keyword>
<keyword id="KW-0150">Chloroplast</keyword>
<keyword id="KW-0408">Iron</keyword>
<keyword id="KW-0411">Iron-sulfur</keyword>
<keyword id="KW-0472">Membrane</keyword>
<keyword id="KW-0479">Metal-binding</keyword>
<keyword id="KW-0520">NAD</keyword>
<keyword id="KW-0521">NADP</keyword>
<keyword id="KW-0934">Plastid</keyword>
<keyword id="KW-0618">Plastoquinone</keyword>
<keyword id="KW-0874">Quinone</keyword>
<keyword id="KW-0677">Repeat</keyword>
<keyword id="KW-0793">Thylakoid</keyword>
<keyword id="KW-1278">Translocase</keyword>
<geneLocation type="chloroplast"/>
<accession>Q8HVN1</accession>
<sequence length="166" mass="19512">MFPMVTEFMNYGQQTIRAARYIGQGFMITLSHANRLPVTIQYPYEKLITSERFRGRIHFEFDKCIACEVCVRVCPIDLPVVDWKLETDIRKKRLLNYSIDFGICIFCGHCVEYCPTNCLSMTEEYELSTYDRHELNYNQIALGRLPMSIIDDYTIRTILNLPEIKT</sequence>
<organism>
    <name type="scientific">Perymeniopsis ovalifolia</name>
    <dbReference type="NCBI Taxonomy" id="183065"/>
    <lineage>
        <taxon>Eukaryota</taxon>
        <taxon>Viridiplantae</taxon>
        <taxon>Streptophyta</taxon>
        <taxon>Embryophyta</taxon>
        <taxon>Tracheophyta</taxon>
        <taxon>Spermatophyta</taxon>
        <taxon>Magnoliopsida</taxon>
        <taxon>eudicotyledons</taxon>
        <taxon>Gunneridae</taxon>
        <taxon>Pentapetalae</taxon>
        <taxon>asterids</taxon>
        <taxon>campanulids</taxon>
        <taxon>Asterales</taxon>
        <taxon>Asteraceae</taxon>
        <taxon>Asteroideae</taxon>
        <taxon>Heliantheae alliance</taxon>
        <taxon>Heliantheae</taxon>
        <taxon>Perymeniopsis</taxon>
    </lineage>
</organism>
<protein>
    <recommendedName>
        <fullName evidence="1">NAD(P)H-quinone oxidoreductase subunit I, chloroplastic</fullName>
        <ecNumber evidence="1">7.1.1.-</ecNumber>
    </recommendedName>
    <alternativeName>
        <fullName evidence="1">NAD(P)H dehydrogenase subunit I</fullName>
        <shortName evidence="1">NDH subunit I</shortName>
    </alternativeName>
    <alternativeName>
        <fullName evidence="1">NADH-plastoquinone oxidoreductase subunit I</fullName>
    </alternativeName>
</protein>
<gene>
    <name evidence="1" type="primary">ndhI</name>
</gene>
<feature type="chain" id="PRO_0000250831" description="NAD(P)H-quinone oxidoreductase subunit I, chloroplastic">
    <location>
        <begin position="1"/>
        <end position="166"/>
    </location>
</feature>
<feature type="domain" description="4Fe-4S ferredoxin-type 1" evidence="1">
    <location>
        <begin position="55"/>
        <end position="84"/>
    </location>
</feature>
<feature type="domain" description="4Fe-4S ferredoxin-type 2" evidence="1">
    <location>
        <begin position="95"/>
        <end position="124"/>
    </location>
</feature>
<feature type="binding site" evidence="1">
    <location>
        <position position="64"/>
    </location>
    <ligand>
        <name>[4Fe-4S] cluster</name>
        <dbReference type="ChEBI" id="CHEBI:49883"/>
        <label>1</label>
    </ligand>
</feature>
<feature type="binding site" evidence="1">
    <location>
        <position position="67"/>
    </location>
    <ligand>
        <name>[4Fe-4S] cluster</name>
        <dbReference type="ChEBI" id="CHEBI:49883"/>
        <label>1</label>
    </ligand>
</feature>
<feature type="binding site" evidence="1">
    <location>
        <position position="70"/>
    </location>
    <ligand>
        <name>[4Fe-4S] cluster</name>
        <dbReference type="ChEBI" id="CHEBI:49883"/>
        <label>1</label>
    </ligand>
</feature>
<feature type="binding site" evidence="1">
    <location>
        <position position="74"/>
    </location>
    <ligand>
        <name>[4Fe-4S] cluster</name>
        <dbReference type="ChEBI" id="CHEBI:49883"/>
        <label>2</label>
    </ligand>
</feature>
<feature type="binding site" evidence="1">
    <location>
        <position position="104"/>
    </location>
    <ligand>
        <name>[4Fe-4S] cluster</name>
        <dbReference type="ChEBI" id="CHEBI:49883"/>
        <label>2</label>
    </ligand>
</feature>
<feature type="binding site" evidence="1">
    <location>
        <position position="107"/>
    </location>
    <ligand>
        <name>[4Fe-4S] cluster</name>
        <dbReference type="ChEBI" id="CHEBI:49883"/>
        <label>2</label>
    </ligand>
</feature>
<feature type="binding site" evidence="1">
    <location>
        <position position="110"/>
    </location>
    <ligand>
        <name>[4Fe-4S] cluster</name>
        <dbReference type="ChEBI" id="CHEBI:49883"/>
        <label>2</label>
    </ligand>
</feature>
<feature type="binding site" evidence="1">
    <location>
        <position position="114"/>
    </location>
    <ligand>
        <name>[4Fe-4S] cluster</name>
        <dbReference type="ChEBI" id="CHEBI:49883"/>
        <label>1</label>
    </ligand>
</feature>
<dbReference type="EC" id="7.1.1.-" evidence="1"/>
<dbReference type="EMBL" id="AF383832">
    <property type="protein sequence ID" value="AAN61773.1"/>
    <property type="molecule type" value="Genomic_DNA"/>
</dbReference>
<dbReference type="SMR" id="Q8HVN1"/>
<dbReference type="GO" id="GO:0009535">
    <property type="term" value="C:chloroplast thylakoid membrane"/>
    <property type="evidence" value="ECO:0007669"/>
    <property type="project" value="UniProtKB-SubCell"/>
</dbReference>
<dbReference type="GO" id="GO:0051539">
    <property type="term" value="F:4 iron, 4 sulfur cluster binding"/>
    <property type="evidence" value="ECO:0007669"/>
    <property type="project" value="UniProtKB-KW"/>
</dbReference>
<dbReference type="GO" id="GO:0005506">
    <property type="term" value="F:iron ion binding"/>
    <property type="evidence" value="ECO:0007669"/>
    <property type="project" value="UniProtKB-UniRule"/>
</dbReference>
<dbReference type="GO" id="GO:0008137">
    <property type="term" value="F:NADH dehydrogenase (ubiquinone) activity"/>
    <property type="evidence" value="ECO:0007669"/>
    <property type="project" value="InterPro"/>
</dbReference>
<dbReference type="GO" id="GO:0048038">
    <property type="term" value="F:quinone binding"/>
    <property type="evidence" value="ECO:0007669"/>
    <property type="project" value="UniProtKB-KW"/>
</dbReference>
<dbReference type="GO" id="GO:0019684">
    <property type="term" value="P:photosynthesis, light reaction"/>
    <property type="evidence" value="ECO:0007669"/>
    <property type="project" value="UniProtKB-UniRule"/>
</dbReference>
<dbReference type="FunFam" id="3.30.70.3270:FF:000006">
    <property type="entry name" value="NAD(P)H-quinone oxidoreductase subunit I, chloroplastic"/>
    <property type="match status" value="1"/>
</dbReference>
<dbReference type="Gene3D" id="3.30.70.3270">
    <property type="match status" value="1"/>
</dbReference>
<dbReference type="HAMAP" id="MF_01351">
    <property type="entry name" value="NDH1_NuoI"/>
    <property type="match status" value="1"/>
</dbReference>
<dbReference type="InterPro" id="IPR017896">
    <property type="entry name" value="4Fe4S_Fe-S-bd"/>
</dbReference>
<dbReference type="InterPro" id="IPR017900">
    <property type="entry name" value="4Fe4S_Fe_S_CS"/>
</dbReference>
<dbReference type="InterPro" id="IPR010226">
    <property type="entry name" value="NADH_quinone_OxRdtase_chainI"/>
</dbReference>
<dbReference type="InterPro" id="IPR004497">
    <property type="entry name" value="NDHI"/>
</dbReference>
<dbReference type="NCBIfam" id="TIGR00403">
    <property type="entry name" value="ndhI"/>
    <property type="match status" value="1"/>
</dbReference>
<dbReference type="NCBIfam" id="TIGR01971">
    <property type="entry name" value="NuoI"/>
    <property type="match status" value="1"/>
</dbReference>
<dbReference type="NCBIfam" id="NF004537">
    <property type="entry name" value="PRK05888.1-3"/>
    <property type="match status" value="1"/>
</dbReference>
<dbReference type="PANTHER" id="PTHR47275">
    <property type="entry name" value="NAD(P)H-QUINONE OXIDOREDUCTASE SUBUNIT I, CHLOROPLASTIC"/>
    <property type="match status" value="1"/>
</dbReference>
<dbReference type="PANTHER" id="PTHR47275:SF1">
    <property type="entry name" value="NAD(P)H-QUINONE OXIDOREDUCTASE SUBUNIT I, CHLOROPLASTIC"/>
    <property type="match status" value="1"/>
</dbReference>
<dbReference type="Pfam" id="PF13187">
    <property type="entry name" value="Fer4_9"/>
    <property type="match status" value="1"/>
</dbReference>
<dbReference type="SUPFAM" id="SSF54862">
    <property type="entry name" value="4Fe-4S ferredoxins"/>
    <property type="match status" value="1"/>
</dbReference>
<dbReference type="PROSITE" id="PS00198">
    <property type="entry name" value="4FE4S_FER_1"/>
    <property type="match status" value="2"/>
</dbReference>
<dbReference type="PROSITE" id="PS51379">
    <property type="entry name" value="4FE4S_FER_2"/>
    <property type="match status" value="2"/>
</dbReference>
<evidence type="ECO:0000255" key="1">
    <source>
        <dbReference type="HAMAP-Rule" id="MF_01351"/>
    </source>
</evidence>
<comment type="function">
    <text evidence="1">NDH shuttles electrons from NAD(P)H:plastoquinone, via FMN and iron-sulfur (Fe-S) centers, to quinones in the photosynthetic chain and possibly in a chloroplast respiratory chain. The immediate electron acceptor for the enzyme in this species is believed to be plastoquinone. Couples the redox reaction to proton translocation, and thus conserves the redox energy in a proton gradient.</text>
</comment>
<comment type="catalytic activity">
    <reaction evidence="1">
        <text>a plastoquinone + NADH + (n+1) H(+)(in) = a plastoquinol + NAD(+) + n H(+)(out)</text>
        <dbReference type="Rhea" id="RHEA:42608"/>
        <dbReference type="Rhea" id="RHEA-COMP:9561"/>
        <dbReference type="Rhea" id="RHEA-COMP:9562"/>
        <dbReference type="ChEBI" id="CHEBI:15378"/>
        <dbReference type="ChEBI" id="CHEBI:17757"/>
        <dbReference type="ChEBI" id="CHEBI:57540"/>
        <dbReference type="ChEBI" id="CHEBI:57945"/>
        <dbReference type="ChEBI" id="CHEBI:62192"/>
    </reaction>
</comment>
<comment type="catalytic activity">
    <reaction evidence="1">
        <text>a plastoquinone + NADPH + (n+1) H(+)(in) = a plastoquinol + NADP(+) + n H(+)(out)</text>
        <dbReference type="Rhea" id="RHEA:42612"/>
        <dbReference type="Rhea" id="RHEA-COMP:9561"/>
        <dbReference type="Rhea" id="RHEA-COMP:9562"/>
        <dbReference type="ChEBI" id="CHEBI:15378"/>
        <dbReference type="ChEBI" id="CHEBI:17757"/>
        <dbReference type="ChEBI" id="CHEBI:57783"/>
        <dbReference type="ChEBI" id="CHEBI:58349"/>
        <dbReference type="ChEBI" id="CHEBI:62192"/>
    </reaction>
</comment>
<comment type="cofactor">
    <cofactor evidence="1">
        <name>[4Fe-4S] cluster</name>
        <dbReference type="ChEBI" id="CHEBI:49883"/>
    </cofactor>
    <text evidence="1">Binds 2 [4Fe-4S] clusters per subunit.</text>
</comment>
<comment type="subunit">
    <text evidence="1">NDH is composed of at least 16 different subunits, 5 of which are encoded in the nucleus.</text>
</comment>
<comment type="subcellular location">
    <subcellularLocation>
        <location evidence="1">Plastid</location>
        <location evidence="1">Chloroplast thylakoid membrane</location>
        <topology evidence="1">Peripheral membrane protein</topology>
    </subcellularLocation>
</comment>
<comment type="similarity">
    <text evidence="1">Belongs to the complex I 23 kDa subunit family.</text>
</comment>
<name>NDHI_PEROV</name>